<proteinExistence type="inferred from homology"/>
<feature type="chain" id="PRO_0000264485" description="DNA-directed RNA polymerase subunit alpha">
    <location>
        <begin position="1"/>
        <end position="344"/>
    </location>
</feature>
<feature type="region of interest" description="Alpha N-terminal domain (alpha-NTD)" evidence="1">
    <location>
        <begin position="1"/>
        <end position="246"/>
    </location>
</feature>
<feature type="region of interest" description="Alpha C-terminal domain (alpha-CTD)" evidence="1">
    <location>
        <begin position="259"/>
        <end position="344"/>
    </location>
</feature>
<comment type="function">
    <text evidence="1">DNA-dependent RNA polymerase catalyzes the transcription of DNA into RNA using the four ribonucleoside triphosphates as substrates.</text>
</comment>
<comment type="catalytic activity">
    <reaction evidence="1">
        <text>RNA(n) + a ribonucleoside 5'-triphosphate = RNA(n+1) + diphosphate</text>
        <dbReference type="Rhea" id="RHEA:21248"/>
        <dbReference type="Rhea" id="RHEA-COMP:14527"/>
        <dbReference type="Rhea" id="RHEA-COMP:17342"/>
        <dbReference type="ChEBI" id="CHEBI:33019"/>
        <dbReference type="ChEBI" id="CHEBI:61557"/>
        <dbReference type="ChEBI" id="CHEBI:140395"/>
        <dbReference type="EC" id="2.7.7.6"/>
    </reaction>
</comment>
<comment type="subunit">
    <text evidence="1">Homodimer. The RNAP catalytic core consists of 2 alpha, 1 beta, 1 beta' and 1 omega subunit. When a sigma factor is associated with the core the holoenzyme is formed, which can initiate transcription.</text>
</comment>
<comment type="domain">
    <text evidence="1">The N-terminal domain is essential for RNAP assembly and basal transcription, whereas the C-terminal domain is involved in interaction with transcriptional regulators and with upstream promoter elements.</text>
</comment>
<comment type="similarity">
    <text evidence="1">Belongs to the RNA polymerase alpha chain family.</text>
</comment>
<evidence type="ECO:0000255" key="1">
    <source>
        <dbReference type="HAMAP-Rule" id="MF_00059"/>
    </source>
</evidence>
<gene>
    <name evidence="1" type="primary">rpoA</name>
    <name type="ordered locus">BAPKO_0530</name>
    <name type="ordered locus">BafPKo_0518</name>
</gene>
<keyword id="KW-0240">DNA-directed RNA polymerase</keyword>
<keyword id="KW-0548">Nucleotidyltransferase</keyword>
<keyword id="KW-0804">Transcription</keyword>
<keyword id="KW-0808">Transferase</keyword>
<name>RPOA_BORAP</name>
<accession>Q0SN05</accession>
<accession>G0ISE5</accession>
<sequence>MPMERFLKDFTIPEKIEFLKSQDDGSYGKFTIYPFERGFGVTIGNTLRRVLLSSIEGYAITAMRVQSNNKDSSSKVVSSEFDLIPGVSEDTLEVIANIKNIHLKLREGEQRKTISFSVSGKDTNVLKASHFERDGVEVFNKDLVIATLSHDVNLDFEFQINYGRGYVSSEQNSKYLEEVNVIALDSIFSPIEKVSYSVEDTRVGQRSDYDKLVMEIWTTGVISAKDAIKKAASIVREFLFPLVDFEDSVSVSFDKSKSESSNLLDMSIEKLDLSVRSLNCLAKENVRTLGELISKNAEELSKARNFGKKSLEEIIEKLGSYQLFLGMSKEDALSVLSKNVKISE</sequence>
<dbReference type="EC" id="2.7.7.6" evidence="1"/>
<dbReference type="EMBL" id="CP000395">
    <property type="protein sequence ID" value="ABH01773.1"/>
    <property type="molecule type" value="Genomic_DNA"/>
</dbReference>
<dbReference type="EMBL" id="CP002933">
    <property type="protein sequence ID" value="AEL69726.1"/>
    <property type="molecule type" value="Genomic_DNA"/>
</dbReference>
<dbReference type="RefSeq" id="WP_011601055.1">
    <property type="nucleotide sequence ID" value="NZ_CP160066.1"/>
</dbReference>
<dbReference type="SMR" id="Q0SN05"/>
<dbReference type="STRING" id="29518.BLA32_01750"/>
<dbReference type="KEGG" id="baf:BAPKO_0530"/>
<dbReference type="KEGG" id="bafz:BafPKo_0518"/>
<dbReference type="PATRIC" id="fig|390236.22.peg.499"/>
<dbReference type="eggNOG" id="COG0202">
    <property type="taxonomic scope" value="Bacteria"/>
</dbReference>
<dbReference type="HOGENOM" id="CLU_053084_0_1_12"/>
<dbReference type="OrthoDB" id="9805706at2"/>
<dbReference type="Proteomes" id="UP000005216">
    <property type="component" value="Chromosome"/>
</dbReference>
<dbReference type="GO" id="GO:0005737">
    <property type="term" value="C:cytoplasm"/>
    <property type="evidence" value="ECO:0007669"/>
    <property type="project" value="UniProtKB-ARBA"/>
</dbReference>
<dbReference type="GO" id="GO:0000428">
    <property type="term" value="C:DNA-directed RNA polymerase complex"/>
    <property type="evidence" value="ECO:0007669"/>
    <property type="project" value="UniProtKB-KW"/>
</dbReference>
<dbReference type="GO" id="GO:0003677">
    <property type="term" value="F:DNA binding"/>
    <property type="evidence" value="ECO:0007669"/>
    <property type="project" value="UniProtKB-UniRule"/>
</dbReference>
<dbReference type="GO" id="GO:0003899">
    <property type="term" value="F:DNA-directed RNA polymerase activity"/>
    <property type="evidence" value="ECO:0007669"/>
    <property type="project" value="UniProtKB-UniRule"/>
</dbReference>
<dbReference type="GO" id="GO:0046983">
    <property type="term" value="F:protein dimerization activity"/>
    <property type="evidence" value="ECO:0007669"/>
    <property type="project" value="InterPro"/>
</dbReference>
<dbReference type="GO" id="GO:0006351">
    <property type="term" value="P:DNA-templated transcription"/>
    <property type="evidence" value="ECO:0007669"/>
    <property type="project" value="UniProtKB-UniRule"/>
</dbReference>
<dbReference type="CDD" id="cd06928">
    <property type="entry name" value="RNAP_alpha_NTD"/>
    <property type="match status" value="1"/>
</dbReference>
<dbReference type="Gene3D" id="1.10.150.20">
    <property type="entry name" value="5' to 3' exonuclease, C-terminal subdomain"/>
    <property type="match status" value="1"/>
</dbReference>
<dbReference type="Gene3D" id="2.170.120.12">
    <property type="entry name" value="DNA-directed RNA polymerase, insert domain"/>
    <property type="match status" value="1"/>
</dbReference>
<dbReference type="Gene3D" id="3.30.1360.10">
    <property type="entry name" value="RNA polymerase, RBP11-like subunit"/>
    <property type="match status" value="1"/>
</dbReference>
<dbReference type="HAMAP" id="MF_00059">
    <property type="entry name" value="RNApol_bact_RpoA"/>
    <property type="match status" value="1"/>
</dbReference>
<dbReference type="InterPro" id="IPR011262">
    <property type="entry name" value="DNA-dir_RNA_pol_insert"/>
</dbReference>
<dbReference type="InterPro" id="IPR011263">
    <property type="entry name" value="DNA-dir_RNA_pol_RpoA/D/Rpb3"/>
</dbReference>
<dbReference type="InterPro" id="IPR011773">
    <property type="entry name" value="DNA-dir_RpoA"/>
</dbReference>
<dbReference type="InterPro" id="IPR036603">
    <property type="entry name" value="RBP11-like"/>
</dbReference>
<dbReference type="InterPro" id="IPR011260">
    <property type="entry name" value="RNAP_asu_C"/>
</dbReference>
<dbReference type="InterPro" id="IPR036643">
    <property type="entry name" value="RNApol_insert_sf"/>
</dbReference>
<dbReference type="NCBIfam" id="NF003513">
    <property type="entry name" value="PRK05182.1-2"/>
    <property type="match status" value="1"/>
</dbReference>
<dbReference type="NCBIfam" id="NF003519">
    <property type="entry name" value="PRK05182.2-5"/>
    <property type="match status" value="1"/>
</dbReference>
<dbReference type="NCBIfam" id="TIGR02027">
    <property type="entry name" value="rpoA"/>
    <property type="match status" value="1"/>
</dbReference>
<dbReference type="Pfam" id="PF01000">
    <property type="entry name" value="RNA_pol_A_bac"/>
    <property type="match status" value="1"/>
</dbReference>
<dbReference type="Pfam" id="PF03118">
    <property type="entry name" value="RNA_pol_A_CTD"/>
    <property type="match status" value="1"/>
</dbReference>
<dbReference type="Pfam" id="PF01193">
    <property type="entry name" value="RNA_pol_L"/>
    <property type="match status" value="1"/>
</dbReference>
<dbReference type="SMART" id="SM00662">
    <property type="entry name" value="RPOLD"/>
    <property type="match status" value="1"/>
</dbReference>
<dbReference type="SUPFAM" id="SSF47789">
    <property type="entry name" value="C-terminal domain of RNA polymerase alpha subunit"/>
    <property type="match status" value="1"/>
</dbReference>
<dbReference type="SUPFAM" id="SSF56553">
    <property type="entry name" value="Insert subdomain of RNA polymerase alpha subunit"/>
    <property type="match status" value="1"/>
</dbReference>
<dbReference type="SUPFAM" id="SSF55257">
    <property type="entry name" value="RBP11-like subunits of RNA polymerase"/>
    <property type="match status" value="1"/>
</dbReference>
<protein>
    <recommendedName>
        <fullName evidence="1">DNA-directed RNA polymerase subunit alpha</fullName>
        <shortName evidence="1">RNAP subunit alpha</shortName>
        <ecNumber evidence="1">2.7.7.6</ecNumber>
    </recommendedName>
    <alternativeName>
        <fullName evidence="1">RNA polymerase subunit alpha</fullName>
    </alternativeName>
    <alternativeName>
        <fullName evidence="1">Transcriptase subunit alpha</fullName>
    </alternativeName>
</protein>
<reference key="1">
    <citation type="journal article" date="2006" name="BMC Genomics">
        <title>Comparative genome analysis: selection pressure on the Borrelia vls cassettes is essential for infectivity.</title>
        <authorList>
            <person name="Gloeckner G."/>
            <person name="Schulte-Spechtel U."/>
            <person name="Schilhabel M."/>
            <person name="Felder M."/>
            <person name="Suehnel J."/>
            <person name="Wilske B."/>
            <person name="Platzer M."/>
        </authorList>
    </citation>
    <scope>NUCLEOTIDE SEQUENCE [LARGE SCALE GENOMIC DNA]</scope>
    <source>
        <strain>PKo</strain>
    </source>
</reference>
<reference key="2">
    <citation type="journal article" date="2011" name="J. Bacteriol.">
        <title>Whole-genome sequences of two Borrelia afzelii and two Borrelia garinii Lyme disease agent isolates.</title>
        <authorList>
            <person name="Casjens S.R."/>
            <person name="Mongodin E.F."/>
            <person name="Qiu W.G."/>
            <person name="Dunn J.J."/>
            <person name="Luft B.J."/>
            <person name="Fraser-Liggett C.M."/>
            <person name="Schutzer S.E."/>
        </authorList>
    </citation>
    <scope>NUCLEOTIDE SEQUENCE [LARGE SCALE GENOMIC DNA]</scope>
    <source>
        <strain>PKo</strain>
    </source>
</reference>
<organism>
    <name type="scientific">Borreliella afzelii (strain PKo)</name>
    <name type="common">Borrelia afzelii</name>
    <dbReference type="NCBI Taxonomy" id="390236"/>
    <lineage>
        <taxon>Bacteria</taxon>
        <taxon>Pseudomonadati</taxon>
        <taxon>Spirochaetota</taxon>
        <taxon>Spirochaetia</taxon>
        <taxon>Spirochaetales</taxon>
        <taxon>Borreliaceae</taxon>
        <taxon>Borreliella</taxon>
    </lineage>
</organism>